<accession>B9KM14</accession>
<protein>
    <recommendedName>
        <fullName evidence="1">Exodeoxyribonuclease 7 large subunit</fullName>
        <ecNumber evidence="1">3.1.11.6</ecNumber>
    </recommendedName>
    <alternativeName>
        <fullName evidence="1">Exodeoxyribonuclease VII large subunit</fullName>
        <shortName evidence="1">Exonuclease VII large subunit</shortName>
    </alternativeName>
</protein>
<feature type="chain" id="PRO_1000200677" description="Exodeoxyribonuclease 7 large subunit">
    <location>
        <begin position="1"/>
        <end position="519"/>
    </location>
</feature>
<feature type="region of interest" description="Disordered" evidence="2">
    <location>
        <begin position="500"/>
        <end position="519"/>
    </location>
</feature>
<evidence type="ECO:0000255" key="1">
    <source>
        <dbReference type="HAMAP-Rule" id="MF_00378"/>
    </source>
</evidence>
<evidence type="ECO:0000256" key="2">
    <source>
        <dbReference type="SAM" id="MobiDB-lite"/>
    </source>
</evidence>
<comment type="function">
    <text evidence="1">Bidirectionally degrades single-stranded DNA into large acid-insoluble oligonucleotides, which are then degraded further into small acid-soluble oligonucleotides.</text>
</comment>
<comment type="catalytic activity">
    <reaction evidence="1">
        <text>Exonucleolytic cleavage in either 5'- to 3'- or 3'- to 5'-direction to yield nucleoside 5'-phosphates.</text>
        <dbReference type="EC" id="3.1.11.6"/>
    </reaction>
</comment>
<comment type="subunit">
    <text evidence="1">Heterooligomer composed of large and small subunits.</text>
</comment>
<comment type="subcellular location">
    <subcellularLocation>
        <location evidence="1">Cytoplasm</location>
    </subcellularLocation>
</comment>
<comment type="similarity">
    <text evidence="1">Belongs to the XseA family.</text>
</comment>
<proteinExistence type="inferred from homology"/>
<name>EX7L_CERSK</name>
<organism>
    <name type="scientific">Cereibacter sphaeroides (strain KD131 / KCTC 12085)</name>
    <name type="common">Rhodobacter sphaeroides</name>
    <dbReference type="NCBI Taxonomy" id="557760"/>
    <lineage>
        <taxon>Bacteria</taxon>
        <taxon>Pseudomonadati</taxon>
        <taxon>Pseudomonadota</taxon>
        <taxon>Alphaproteobacteria</taxon>
        <taxon>Rhodobacterales</taxon>
        <taxon>Paracoccaceae</taxon>
        <taxon>Cereibacter</taxon>
    </lineage>
</organism>
<reference key="1">
    <citation type="journal article" date="2009" name="J. Bacteriol.">
        <title>Complete genome sequence of Rhodobacter sphaeroides KD131.</title>
        <authorList>
            <person name="Lim S.-K."/>
            <person name="Kim S.J."/>
            <person name="Cha S.H."/>
            <person name="Oh Y.-K."/>
            <person name="Rhee H.-J."/>
            <person name="Kim M.-S."/>
            <person name="Lee J.K."/>
        </authorList>
    </citation>
    <scope>NUCLEOTIDE SEQUENCE [LARGE SCALE GENOMIC DNA]</scope>
    <source>
        <strain>KD131 / KCTC 12085</strain>
    </source>
</reference>
<dbReference type="EC" id="3.1.11.6" evidence="1"/>
<dbReference type="EMBL" id="CP001150">
    <property type="protein sequence ID" value="ACM00012.1"/>
    <property type="molecule type" value="Genomic_DNA"/>
</dbReference>
<dbReference type="RefSeq" id="WP_012643513.1">
    <property type="nucleotide sequence ID" value="NC_011963.1"/>
</dbReference>
<dbReference type="SMR" id="B9KM14"/>
<dbReference type="GeneID" id="67445634"/>
<dbReference type="KEGG" id="rsk:RSKD131_0152"/>
<dbReference type="HOGENOM" id="CLU_023625_3_1_5"/>
<dbReference type="GO" id="GO:0005737">
    <property type="term" value="C:cytoplasm"/>
    <property type="evidence" value="ECO:0007669"/>
    <property type="project" value="UniProtKB-SubCell"/>
</dbReference>
<dbReference type="GO" id="GO:0009318">
    <property type="term" value="C:exodeoxyribonuclease VII complex"/>
    <property type="evidence" value="ECO:0007669"/>
    <property type="project" value="InterPro"/>
</dbReference>
<dbReference type="GO" id="GO:0008855">
    <property type="term" value="F:exodeoxyribonuclease VII activity"/>
    <property type="evidence" value="ECO:0007669"/>
    <property type="project" value="UniProtKB-UniRule"/>
</dbReference>
<dbReference type="GO" id="GO:0003676">
    <property type="term" value="F:nucleic acid binding"/>
    <property type="evidence" value="ECO:0007669"/>
    <property type="project" value="InterPro"/>
</dbReference>
<dbReference type="GO" id="GO:0006308">
    <property type="term" value="P:DNA catabolic process"/>
    <property type="evidence" value="ECO:0007669"/>
    <property type="project" value="UniProtKB-UniRule"/>
</dbReference>
<dbReference type="CDD" id="cd04489">
    <property type="entry name" value="ExoVII_LU_OBF"/>
    <property type="match status" value="1"/>
</dbReference>
<dbReference type="HAMAP" id="MF_00378">
    <property type="entry name" value="Exonuc_7_L"/>
    <property type="match status" value="1"/>
</dbReference>
<dbReference type="InterPro" id="IPR003753">
    <property type="entry name" value="Exonuc_VII_L"/>
</dbReference>
<dbReference type="InterPro" id="IPR020579">
    <property type="entry name" value="Exonuc_VII_lsu_C"/>
</dbReference>
<dbReference type="InterPro" id="IPR025824">
    <property type="entry name" value="OB-fold_nuc-bd_dom"/>
</dbReference>
<dbReference type="NCBIfam" id="TIGR00237">
    <property type="entry name" value="xseA"/>
    <property type="match status" value="1"/>
</dbReference>
<dbReference type="PANTHER" id="PTHR30008">
    <property type="entry name" value="EXODEOXYRIBONUCLEASE 7 LARGE SUBUNIT"/>
    <property type="match status" value="1"/>
</dbReference>
<dbReference type="PANTHER" id="PTHR30008:SF0">
    <property type="entry name" value="EXODEOXYRIBONUCLEASE 7 LARGE SUBUNIT"/>
    <property type="match status" value="1"/>
</dbReference>
<dbReference type="Pfam" id="PF02601">
    <property type="entry name" value="Exonuc_VII_L"/>
    <property type="match status" value="2"/>
</dbReference>
<dbReference type="Pfam" id="PF13742">
    <property type="entry name" value="tRNA_anti_2"/>
    <property type="match status" value="1"/>
</dbReference>
<keyword id="KW-0963">Cytoplasm</keyword>
<keyword id="KW-0269">Exonuclease</keyword>
<keyword id="KW-0378">Hydrolase</keyword>
<keyword id="KW-0540">Nuclease</keyword>
<gene>
    <name evidence="1" type="primary">xseA</name>
    <name type="ordered locus">RSKD131_0152</name>
</gene>
<sequence length="519" mass="56321">MSDLFEDPAPSRNTPEFTVSELSGAVKRVIEGEFGLVRVRGEIGRVSRPASGHLYFDLKDDRAVMAAICWKGQAGRLSVRPEEGMEVVATGRMTTFPGQSKYQIIVEDMAPAGAGALMAMLEKRRAALAAEGLFDAARKRPLPYLPRVIGVVTSPSGAVIRDILHRLRDRFPSHVLIWPVAVQGEKCAPEVAAAIRGFNALPEGGPIPRPDLLIVARGGGSLEDLWGFNEEIVVRAAAESRIPLISAVGHETDTTLIDHAADRRAPTPTAAAEMAVPVRLELLAGLDGQGARLSRCAAETIRRRDQRLRDLARALPRLESLVAGPSQRFDLWSGRLSGALGQSVAARRARLEPLGAHLRPRLLADLVARQKDRLGDRTRSLETCLGRRAERARDRFEALSARLAPAFARLIAETERATRRDAATLGTLAARLDAAPEARLARLSDRLEALDRLRQTLGYRETLKRGYAVVRADGAVVTTKAEAGTAAVLEIEFQDGRLSVGRGKTRKPKEEPPAQGSLL</sequence>